<feature type="chain" id="PRO_0000340383" description="DNA ligase">
    <location>
        <begin position="1"/>
        <end position="670"/>
    </location>
</feature>
<feature type="domain" description="BRCT" evidence="1">
    <location>
        <begin position="591"/>
        <end position="670"/>
    </location>
</feature>
<feature type="active site" description="N6-AMP-lysine intermediate" evidence="1">
    <location>
        <position position="113"/>
    </location>
</feature>
<feature type="binding site" evidence="1">
    <location>
        <begin position="32"/>
        <end position="36"/>
    </location>
    <ligand>
        <name>NAD(+)</name>
        <dbReference type="ChEBI" id="CHEBI:57540"/>
    </ligand>
</feature>
<feature type="binding site" evidence="1">
    <location>
        <begin position="81"/>
        <end position="82"/>
    </location>
    <ligand>
        <name>NAD(+)</name>
        <dbReference type="ChEBI" id="CHEBI:57540"/>
    </ligand>
</feature>
<feature type="binding site" evidence="1">
    <location>
        <position position="111"/>
    </location>
    <ligand>
        <name>NAD(+)</name>
        <dbReference type="ChEBI" id="CHEBI:57540"/>
    </ligand>
</feature>
<feature type="binding site" evidence="1">
    <location>
        <position position="134"/>
    </location>
    <ligand>
        <name>NAD(+)</name>
        <dbReference type="ChEBI" id="CHEBI:57540"/>
    </ligand>
</feature>
<feature type="binding site" evidence="1">
    <location>
        <position position="171"/>
    </location>
    <ligand>
        <name>NAD(+)</name>
        <dbReference type="ChEBI" id="CHEBI:57540"/>
    </ligand>
</feature>
<feature type="binding site" evidence="1">
    <location>
        <position position="290"/>
    </location>
    <ligand>
        <name>NAD(+)</name>
        <dbReference type="ChEBI" id="CHEBI:57540"/>
    </ligand>
</feature>
<feature type="binding site" evidence="1">
    <location>
        <position position="314"/>
    </location>
    <ligand>
        <name>NAD(+)</name>
        <dbReference type="ChEBI" id="CHEBI:57540"/>
    </ligand>
</feature>
<feature type="binding site" evidence="1">
    <location>
        <position position="408"/>
    </location>
    <ligand>
        <name>Zn(2+)</name>
        <dbReference type="ChEBI" id="CHEBI:29105"/>
    </ligand>
</feature>
<feature type="binding site" evidence="1">
    <location>
        <position position="411"/>
    </location>
    <ligand>
        <name>Zn(2+)</name>
        <dbReference type="ChEBI" id="CHEBI:29105"/>
    </ligand>
</feature>
<feature type="binding site" evidence="1">
    <location>
        <position position="426"/>
    </location>
    <ligand>
        <name>Zn(2+)</name>
        <dbReference type="ChEBI" id="CHEBI:29105"/>
    </ligand>
</feature>
<feature type="binding site" evidence="1">
    <location>
        <position position="432"/>
    </location>
    <ligand>
        <name>Zn(2+)</name>
        <dbReference type="ChEBI" id="CHEBI:29105"/>
    </ligand>
</feature>
<name>DNLJ_SHESH</name>
<proteinExistence type="inferred from homology"/>
<protein>
    <recommendedName>
        <fullName evidence="1">DNA ligase</fullName>
        <ecNumber evidence="1">6.5.1.2</ecNumber>
    </recommendedName>
    <alternativeName>
        <fullName evidence="1">Polydeoxyribonucleotide synthase [NAD(+)]</fullName>
    </alternativeName>
</protein>
<reference key="1">
    <citation type="submission" date="2007-08" db="EMBL/GenBank/DDBJ databases">
        <title>Complete sequence of Shewanella sediminis HAW-EB3.</title>
        <authorList>
            <consortium name="US DOE Joint Genome Institute"/>
            <person name="Copeland A."/>
            <person name="Lucas S."/>
            <person name="Lapidus A."/>
            <person name="Barry K."/>
            <person name="Glavina del Rio T."/>
            <person name="Dalin E."/>
            <person name="Tice H."/>
            <person name="Pitluck S."/>
            <person name="Chertkov O."/>
            <person name="Brettin T."/>
            <person name="Bruce D."/>
            <person name="Detter J.C."/>
            <person name="Han C."/>
            <person name="Schmutz J."/>
            <person name="Larimer F."/>
            <person name="Land M."/>
            <person name="Hauser L."/>
            <person name="Kyrpides N."/>
            <person name="Kim E."/>
            <person name="Zhao J.-S."/>
            <person name="Richardson P."/>
        </authorList>
    </citation>
    <scope>NUCLEOTIDE SEQUENCE [LARGE SCALE GENOMIC DNA]</scope>
    <source>
        <strain>HAW-EB3</strain>
    </source>
</reference>
<comment type="function">
    <text evidence="1">DNA ligase that catalyzes the formation of phosphodiester linkages between 5'-phosphoryl and 3'-hydroxyl groups in double-stranded DNA using NAD as a coenzyme and as the energy source for the reaction. It is essential for DNA replication and repair of damaged DNA.</text>
</comment>
<comment type="catalytic activity">
    <reaction evidence="1">
        <text>NAD(+) + (deoxyribonucleotide)n-3'-hydroxyl + 5'-phospho-(deoxyribonucleotide)m = (deoxyribonucleotide)n+m + AMP + beta-nicotinamide D-nucleotide.</text>
        <dbReference type="EC" id="6.5.1.2"/>
    </reaction>
</comment>
<comment type="cofactor">
    <cofactor evidence="1">
        <name>Mg(2+)</name>
        <dbReference type="ChEBI" id="CHEBI:18420"/>
    </cofactor>
    <cofactor evidence="1">
        <name>Mn(2+)</name>
        <dbReference type="ChEBI" id="CHEBI:29035"/>
    </cofactor>
</comment>
<comment type="similarity">
    <text evidence="1">Belongs to the NAD-dependent DNA ligase family. LigA subfamily.</text>
</comment>
<sequence>MHAIQEEIKQLTSVLNEHNYRYYVDDAPSVPDAEYDRLINRLKQLEAENPELCLPDSPTQRVGGVALAKFNQITHLKPMLSLDNVFSEDEFDAFYKRISDKTSETPTFCCEPKLDGLAVSILYRDGVYERAATRGDGSVGEDITENVRTIRSIPLKLRGSDFPPLLEVRGEVIMPKKAFDSLNDRARAKGEKLFVNPRNAAAGSLRQLDSKITASRALGFYAYALGVVEPESWPLGKGHHEQLMQLKSWGFPVSSEVKLCGDVKTVLDYYADILERREALDYEIDGVVIKVDSIEHQLQLGFVAKAPRWATAFKFPAQEEMTLLEGVDFQVGRTGAVTPVARLKPVFVGGVTVSNATLHNADEIARLGVKVGDTVIVRRAGDVIPQVVAIVAEKRPVSANDILFPQTCPVCDSMVERTEGEAVARCTGGLFCEAQRKEAIKHFASRKALNVDGMGDKVVEQLIDKELVASPADLFRLTASAMTMLDRMGMKSATKLVAAIEDAKQTTFARFLYGLGIREVGEATAANLANYFKNLDKLKSADADEFIKVDDVGAIVAQHLTYFFAQPHNLEVVDNLVQAGVHWPEIEEVAEEALSLKGQTWVLTGTLTKLNRNDAKAQLQALGAKVAGSVSKNTDCLVAGEAAGSKLTKAQDLGVKVLDEDGLLAVLAGE</sequence>
<organism>
    <name type="scientific">Shewanella sediminis (strain HAW-EB3)</name>
    <dbReference type="NCBI Taxonomy" id="425104"/>
    <lineage>
        <taxon>Bacteria</taxon>
        <taxon>Pseudomonadati</taxon>
        <taxon>Pseudomonadota</taxon>
        <taxon>Gammaproteobacteria</taxon>
        <taxon>Alteromonadales</taxon>
        <taxon>Shewanellaceae</taxon>
        <taxon>Shewanella</taxon>
    </lineage>
</organism>
<keyword id="KW-0227">DNA damage</keyword>
<keyword id="KW-0234">DNA repair</keyword>
<keyword id="KW-0235">DNA replication</keyword>
<keyword id="KW-0436">Ligase</keyword>
<keyword id="KW-0460">Magnesium</keyword>
<keyword id="KW-0464">Manganese</keyword>
<keyword id="KW-0479">Metal-binding</keyword>
<keyword id="KW-0520">NAD</keyword>
<keyword id="KW-1185">Reference proteome</keyword>
<keyword id="KW-0862">Zinc</keyword>
<accession>A8FU26</accession>
<dbReference type="EC" id="6.5.1.2" evidence="1"/>
<dbReference type="EMBL" id="CP000821">
    <property type="protein sequence ID" value="ABV36349.1"/>
    <property type="molecule type" value="Genomic_DNA"/>
</dbReference>
<dbReference type="RefSeq" id="WP_012142085.1">
    <property type="nucleotide sequence ID" value="NC_009831.1"/>
</dbReference>
<dbReference type="SMR" id="A8FU26"/>
<dbReference type="STRING" id="425104.Ssed_1738"/>
<dbReference type="KEGG" id="sse:Ssed_1738"/>
<dbReference type="eggNOG" id="COG0272">
    <property type="taxonomic scope" value="Bacteria"/>
</dbReference>
<dbReference type="HOGENOM" id="CLU_007764_2_1_6"/>
<dbReference type="OrthoDB" id="9759736at2"/>
<dbReference type="Proteomes" id="UP000002015">
    <property type="component" value="Chromosome"/>
</dbReference>
<dbReference type="GO" id="GO:0005829">
    <property type="term" value="C:cytosol"/>
    <property type="evidence" value="ECO:0007669"/>
    <property type="project" value="TreeGrafter"/>
</dbReference>
<dbReference type="GO" id="GO:0003911">
    <property type="term" value="F:DNA ligase (NAD+) activity"/>
    <property type="evidence" value="ECO:0007669"/>
    <property type="project" value="UniProtKB-UniRule"/>
</dbReference>
<dbReference type="GO" id="GO:0046872">
    <property type="term" value="F:metal ion binding"/>
    <property type="evidence" value="ECO:0007669"/>
    <property type="project" value="UniProtKB-KW"/>
</dbReference>
<dbReference type="GO" id="GO:0006281">
    <property type="term" value="P:DNA repair"/>
    <property type="evidence" value="ECO:0007669"/>
    <property type="project" value="UniProtKB-KW"/>
</dbReference>
<dbReference type="GO" id="GO:0006260">
    <property type="term" value="P:DNA replication"/>
    <property type="evidence" value="ECO:0007669"/>
    <property type="project" value="UniProtKB-KW"/>
</dbReference>
<dbReference type="CDD" id="cd17748">
    <property type="entry name" value="BRCT_DNA_ligase_like"/>
    <property type="match status" value="1"/>
</dbReference>
<dbReference type="CDD" id="cd00114">
    <property type="entry name" value="LIGANc"/>
    <property type="match status" value="1"/>
</dbReference>
<dbReference type="FunFam" id="1.10.150.20:FF:000006">
    <property type="entry name" value="DNA ligase"/>
    <property type="match status" value="1"/>
</dbReference>
<dbReference type="FunFam" id="1.10.150.20:FF:000007">
    <property type="entry name" value="DNA ligase"/>
    <property type="match status" value="1"/>
</dbReference>
<dbReference type="FunFam" id="1.10.287.610:FF:000002">
    <property type="entry name" value="DNA ligase"/>
    <property type="match status" value="1"/>
</dbReference>
<dbReference type="FunFam" id="2.40.50.140:FF:000012">
    <property type="entry name" value="DNA ligase"/>
    <property type="match status" value="1"/>
</dbReference>
<dbReference type="FunFam" id="3.30.470.30:FF:000001">
    <property type="entry name" value="DNA ligase"/>
    <property type="match status" value="1"/>
</dbReference>
<dbReference type="Gene3D" id="6.20.10.30">
    <property type="match status" value="1"/>
</dbReference>
<dbReference type="Gene3D" id="1.10.150.20">
    <property type="entry name" value="5' to 3' exonuclease, C-terminal subdomain"/>
    <property type="match status" value="2"/>
</dbReference>
<dbReference type="Gene3D" id="3.40.50.10190">
    <property type="entry name" value="BRCT domain"/>
    <property type="match status" value="1"/>
</dbReference>
<dbReference type="Gene3D" id="3.30.470.30">
    <property type="entry name" value="DNA ligase/mRNA capping enzyme"/>
    <property type="match status" value="1"/>
</dbReference>
<dbReference type="Gene3D" id="1.10.287.610">
    <property type="entry name" value="Helix hairpin bin"/>
    <property type="match status" value="1"/>
</dbReference>
<dbReference type="Gene3D" id="2.40.50.140">
    <property type="entry name" value="Nucleic acid-binding proteins"/>
    <property type="match status" value="1"/>
</dbReference>
<dbReference type="HAMAP" id="MF_01588">
    <property type="entry name" value="DNA_ligase_A"/>
    <property type="match status" value="1"/>
</dbReference>
<dbReference type="InterPro" id="IPR001357">
    <property type="entry name" value="BRCT_dom"/>
</dbReference>
<dbReference type="InterPro" id="IPR036420">
    <property type="entry name" value="BRCT_dom_sf"/>
</dbReference>
<dbReference type="InterPro" id="IPR041663">
    <property type="entry name" value="DisA/LigA_HHH"/>
</dbReference>
<dbReference type="InterPro" id="IPR001679">
    <property type="entry name" value="DNA_ligase"/>
</dbReference>
<dbReference type="InterPro" id="IPR033136">
    <property type="entry name" value="DNA_ligase_CS"/>
</dbReference>
<dbReference type="InterPro" id="IPR013839">
    <property type="entry name" value="DNAligase_adenylation"/>
</dbReference>
<dbReference type="InterPro" id="IPR013840">
    <property type="entry name" value="DNAligase_N"/>
</dbReference>
<dbReference type="InterPro" id="IPR012340">
    <property type="entry name" value="NA-bd_OB-fold"/>
</dbReference>
<dbReference type="InterPro" id="IPR004150">
    <property type="entry name" value="NAD_DNA_ligase_OB"/>
</dbReference>
<dbReference type="InterPro" id="IPR010994">
    <property type="entry name" value="RuvA_2-like"/>
</dbReference>
<dbReference type="InterPro" id="IPR004149">
    <property type="entry name" value="Znf_DNAligase_C4"/>
</dbReference>
<dbReference type="NCBIfam" id="TIGR00575">
    <property type="entry name" value="dnlj"/>
    <property type="match status" value="1"/>
</dbReference>
<dbReference type="NCBIfam" id="NF005932">
    <property type="entry name" value="PRK07956.1"/>
    <property type="match status" value="1"/>
</dbReference>
<dbReference type="PANTHER" id="PTHR23389">
    <property type="entry name" value="CHROMOSOME TRANSMISSION FIDELITY FACTOR 18"/>
    <property type="match status" value="1"/>
</dbReference>
<dbReference type="PANTHER" id="PTHR23389:SF9">
    <property type="entry name" value="DNA LIGASE"/>
    <property type="match status" value="1"/>
</dbReference>
<dbReference type="Pfam" id="PF00533">
    <property type="entry name" value="BRCT"/>
    <property type="match status" value="1"/>
</dbReference>
<dbReference type="Pfam" id="PF01653">
    <property type="entry name" value="DNA_ligase_aden"/>
    <property type="match status" value="1"/>
</dbReference>
<dbReference type="Pfam" id="PF03120">
    <property type="entry name" value="DNA_ligase_OB"/>
    <property type="match status" value="1"/>
</dbReference>
<dbReference type="Pfam" id="PF03119">
    <property type="entry name" value="DNA_ligase_ZBD"/>
    <property type="match status" value="1"/>
</dbReference>
<dbReference type="Pfam" id="PF12826">
    <property type="entry name" value="HHH_2"/>
    <property type="match status" value="1"/>
</dbReference>
<dbReference type="Pfam" id="PF14520">
    <property type="entry name" value="HHH_5"/>
    <property type="match status" value="1"/>
</dbReference>
<dbReference type="PIRSF" id="PIRSF001604">
    <property type="entry name" value="LigA"/>
    <property type="match status" value="1"/>
</dbReference>
<dbReference type="SMART" id="SM00292">
    <property type="entry name" value="BRCT"/>
    <property type="match status" value="1"/>
</dbReference>
<dbReference type="SMART" id="SM00532">
    <property type="entry name" value="LIGANc"/>
    <property type="match status" value="1"/>
</dbReference>
<dbReference type="SUPFAM" id="SSF52113">
    <property type="entry name" value="BRCT domain"/>
    <property type="match status" value="1"/>
</dbReference>
<dbReference type="SUPFAM" id="SSF56091">
    <property type="entry name" value="DNA ligase/mRNA capping enzyme, catalytic domain"/>
    <property type="match status" value="1"/>
</dbReference>
<dbReference type="SUPFAM" id="SSF50249">
    <property type="entry name" value="Nucleic acid-binding proteins"/>
    <property type="match status" value="1"/>
</dbReference>
<dbReference type="SUPFAM" id="SSF47781">
    <property type="entry name" value="RuvA domain 2-like"/>
    <property type="match status" value="1"/>
</dbReference>
<dbReference type="PROSITE" id="PS50172">
    <property type="entry name" value="BRCT"/>
    <property type="match status" value="1"/>
</dbReference>
<dbReference type="PROSITE" id="PS01056">
    <property type="entry name" value="DNA_LIGASE_N2"/>
    <property type="match status" value="1"/>
</dbReference>
<evidence type="ECO:0000255" key="1">
    <source>
        <dbReference type="HAMAP-Rule" id="MF_01588"/>
    </source>
</evidence>
<gene>
    <name evidence="1" type="primary">ligA</name>
    <name type="ordered locus">Ssed_1738</name>
</gene>